<organism>
    <name type="scientific">Thermoplasma acidophilum (strain ATCC 25905 / DSM 1728 / JCM 9062 / NBRC 15155 / AMRC-C165)</name>
    <dbReference type="NCBI Taxonomy" id="273075"/>
    <lineage>
        <taxon>Archaea</taxon>
        <taxon>Methanobacteriati</taxon>
        <taxon>Thermoplasmatota</taxon>
        <taxon>Thermoplasmata</taxon>
        <taxon>Thermoplasmatales</taxon>
        <taxon>Thermoplasmataceae</taxon>
        <taxon>Thermoplasma</taxon>
    </lineage>
</organism>
<proteinExistence type="inferred from homology"/>
<sequence length="75" mass="8781">MGSIRPFNVKRTAEELADKFPNVFGDKFEENKKKLEKMMPDVSKRTINMIAGYITRYAVKKKEKAKREIEENSLN</sequence>
<keyword id="KW-1185">Reference proteome</keyword>
<keyword id="KW-0687">Ribonucleoprotein</keyword>
<keyword id="KW-0689">Ribosomal protein</keyword>
<name>RS17E_THEAC</name>
<protein>
    <recommendedName>
        <fullName evidence="1">Small ribosomal subunit protein eS17</fullName>
    </recommendedName>
    <alternativeName>
        <fullName evidence="2">30S ribosomal protein S17e</fullName>
    </alternativeName>
</protein>
<dbReference type="EMBL" id="AL445064">
    <property type="protein sequence ID" value="CAC11729.1"/>
    <property type="molecule type" value="Genomic_DNA"/>
</dbReference>
<dbReference type="RefSeq" id="WP_010901014.1">
    <property type="nucleotide sequence ID" value="NC_002578.1"/>
</dbReference>
<dbReference type="SMR" id="Q9HKK8"/>
<dbReference type="FunCoup" id="Q9HKK8">
    <property type="interactions" value="70"/>
</dbReference>
<dbReference type="STRING" id="273075.gene:9571809"/>
<dbReference type="PaxDb" id="273075-Ta0589"/>
<dbReference type="EnsemblBacteria" id="CAC11729">
    <property type="protein sequence ID" value="CAC11729"/>
    <property type="gene ID" value="CAC11729"/>
</dbReference>
<dbReference type="KEGG" id="tac:Ta0589"/>
<dbReference type="eggNOG" id="arCOG01885">
    <property type="taxonomic scope" value="Archaea"/>
</dbReference>
<dbReference type="HOGENOM" id="CLU_176720_2_0_2"/>
<dbReference type="InParanoid" id="Q9HKK8"/>
<dbReference type="OrthoDB" id="52479at2157"/>
<dbReference type="Proteomes" id="UP000001024">
    <property type="component" value="Chromosome"/>
</dbReference>
<dbReference type="GO" id="GO:1990904">
    <property type="term" value="C:ribonucleoprotein complex"/>
    <property type="evidence" value="ECO:0007669"/>
    <property type="project" value="UniProtKB-KW"/>
</dbReference>
<dbReference type="GO" id="GO:0005840">
    <property type="term" value="C:ribosome"/>
    <property type="evidence" value="ECO:0007669"/>
    <property type="project" value="UniProtKB-KW"/>
</dbReference>
<dbReference type="GO" id="GO:0003735">
    <property type="term" value="F:structural constituent of ribosome"/>
    <property type="evidence" value="ECO:0007669"/>
    <property type="project" value="InterPro"/>
</dbReference>
<dbReference type="GO" id="GO:0006412">
    <property type="term" value="P:translation"/>
    <property type="evidence" value="ECO:0007669"/>
    <property type="project" value="UniProtKB-UniRule"/>
</dbReference>
<dbReference type="Gene3D" id="1.10.60.20">
    <property type="entry name" value="Ribosomal protein S17e-like"/>
    <property type="match status" value="1"/>
</dbReference>
<dbReference type="HAMAP" id="MF_00511">
    <property type="entry name" value="Ribosomal_eS17"/>
    <property type="match status" value="1"/>
</dbReference>
<dbReference type="InterPro" id="IPR001210">
    <property type="entry name" value="Ribosomal_eS17"/>
</dbReference>
<dbReference type="InterPro" id="IPR018273">
    <property type="entry name" value="Ribosomal_eS17_CS"/>
</dbReference>
<dbReference type="InterPro" id="IPR036401">
    <property type="entry name" value="Ribosomal_eS17_sf"/>
</dbReference>
<dbReference type="NCBIfam" id="NF002242">
    <property type="entry name" value="PRK01151.1"/>
    <property type="match status" value="1"/>
</dbReference>
<dbReference type="Pfam" id="PF00833">
    <property type="entry name" value="Ribosomal_S17e"/>
    <property type="match status" value="1"/>
</dbReference>
<dbReference type="SUPFAM" id="SSF116820">
    <property type="entry name" value="Rps17e-like"/>
    <property type="match status" value="1"/>
</dbReference>
<dbReference type="PROSITE" id="PS00712">
    <property type="entry name" value="RIBOSOMAL_S17E"/>
    <property type="match status" value="1"/>
</dbReference>
<feature type="chain" id="PRO_0000141568" description="Small ribosomal subunit protein eS17">
    <location>
        <begin position="1"/>
        <end position="75"/>
    </location>
</feature>
<evidence type="ECO:0000255" key="1">
    <source>
        <dbReference type="HAMAP-Rule" id="MF_00511"/>
    </source>
</evidence>
<evidence type="ECO:0000305" key="2"/>
<gene>
    <name evidence="1" type="primary">rps17e</name>
    <name type="ordered locus">Ta0589</name>
</gene>
<accession>Q9HKK8</accession>
<comment type="similarity">
    <text evidence="1">Belongs to the eukaryotic ribosomal protein eS17 family.</text>
</comment>
<reference key="1">
    <citation type="journal article" date="2000" name="Nature">
        <title>The genome sequence of the thermoacidophilic scavenger Thermoplasma acidophilum.</title>
        <authorList>
            <person name="Ruepp A."/>
            <person name="Graml W."/>
            <person name="Santos-Martinez M.-L."/>
            <person name="Koretke K.K."/>
            <person name="Volker C."/>
            <person name="Mewes H.-W."/>
            <person name="Frishman D."/>
            <person name="Stocker S."/>
            <person name="Lupas A.N."/>
            <person name="Baumeister W."/>
        </authorList>
    </citation>
    <scope>NUCLEOTIDE SEQUENCE [LARGE SCALE GENOMIC DNA]</scope>
    <source>
        <strain>ATCC 25905 / DSM 1728 / JCM 9062 / NBRC 15155 / AMRC-C165</strain>
    </source>
</reference>